<dbReference type="EMBL" id="CR382136">
    <property type="protein sequence ID" value="CAG86772.1"/>
    <property type="molecule type" value="Genomic_DNA"/>
</dbReference>
<dbReference type="RefSeq" id="XP_458633.1">
    <property type="nucleotide sequence ID" value="XM_458633.1"/>
</dbReference>
<dbReference type="SMR" id="Q6BT37"/>
<dbReference type="FunCoup" id="Q6BT37">
    <property type="interactions" value="114"/>
</dbReference>
<dbReference type="STRING" id="284592.Q6BT37"/>
<dbReference type="GeneID" id="2901434"/>
<dbReference type="KEGG" id="dha:DEHA2D03828g"/>
<dbReference type="VEuPathDB" id="FungiDB:DEHA2D03828g"/>
<dbReference type="eggNOG" id="ENOG502S6JA">
    <property type="taxonomic scope" value="Eukaryota"/>
</dbReference>
<dbReference type="HOGENOM" id="CLU_118207_0_0_1"/>
<dbReference type="InParanoid" id="Q6BT37"/>
<dbReference type="OMA" id="HLKYYPP"/>
<dbReference type="OrthoDB" id="4082176at2759"/>
<dbReference type="Proteomes" id="UP000000599">
    <property type="component" value="Chromosome D"/>
</dbReference>
<dbReference type="GO" id="GO:0005886">
    <property type="term" value="C:plasma membrane"/>
    <property type="evidence" value="ECO:0007669"/>
    <property type="project" value="UniProtKB-SubCell"/>
</dbReference>
<dbReference type="GO" id="GO:0006112">
    <property type="term" value="P:energy reserve metabolic process"/>
    <property type="evidence" value="ECO:0007669"/>
    <property type="project" value="InterPro"/>
</dbReference>
<dbReference type="Gene3D" id="3.40.1000.40">
    <property type="entry name" value="Respiratory growth induced protein 1"/>
    <property type="match status" value="1"/>
</dbReference>
<dbReference type="InterPro" id="IPR022554">
    <property type="entry name" value="RGI1"/>
</dbReference>
<dbReference type="InterPro" id="IPR038235">
    <property type="entry name" value="RGI1_sf"/>
</dbReference>
<dbReference type="Pfam" id="PF10843">
    <property type="entry name" value="RGI1"/>
    <property type="match status" value="1"/>
</dbReference>
<accession>Q6BT37</accession>
<gene>
    <name type="primary">RGI1</name>
    <name type="ordered locus">DEHA2D03828g</name>
</gene>
<feature type="chain" id="PRO_0000402285" description="Respiratory growth induced protein 1">
    <location>
        <begin position="1"/>
        <end position="196"/>
    </location>
</feature>
<feature type="region of interest" description="Disordered" evidence="2">
    <location>
        <begin position="28"/>
        <end position="48"/>
    </location>
</feature>
<feature type="compositionally biased region" description="Low complexity" evidence="2">
    <location>
        <begin position="29"/>
        <end position="45"/>
    </location>
</feature>
<evidence type="ECO:0000250" key="1"/>
<evidence type="ECO:0000256" key="2">
    <source>
        <dbReference type="SAM" id="MobiDB-lite"/>
    </source>
</evidence>
<evidence type="ECO:0000305" key="3"/>
<comment type="function">
    <text evidence="1">Involved in the control of energetic metabolism and significantly contribute to cell fitness, especially under respiratory growth conditions.</text>
</comment>
<comment type="subcellular location">
    <subcellularLocation>
        <location evidence="1">Cell membrane</location>
        <topology evidence="1">Peripheral membrane protein</topology>
    </subcellularLocation>
</comment>
<comment type="similarity">
    <text evidence="3">Belongs to the RGI1 family.</text>
</comment>
<sequence length="196" mass="23008">MTKKNKNQTLALDLDNCEKLTQLKEIPKSRSSSITSIESEGSIQSVLKPPPMREFEDVVAFESYIRDETWDNDFDYCHAHLSYYPPFITKEVHGNMDKIKPTMNKKSRKFKRNLQHHIQKHLMPEMEKCSGFTMDFGKAGVEETPTMLKWKFEDTSDHGFSKEEENQFDRHWKLQLEVTCNNENPLVEVDYMAIPI</sequence>
<reference key="1">
    <citation type="journal article" date="2004" name="Nature">
        <title>Genome evolution in yeasts.</title>
        <authorList>
            <person name="Dujon B."/>
            <person name="Sherman D."/>
            <person name="Fischer G."/>
            <person name="Durrens P."/>
            <person name="Casaregola S."/>
            <person name="Lafontaine I."/>
            <person name="de Montigny J."/>
            <person name="Marck C."/>
            <person name="Neuveglise C."/>
            <person name="Talla E."/>
            <person name="Goffard N."/>
            <person name="Frangeul L."/>
            <person name="Aigle M."/>
            <person name="Anthouard V."/>
            <person name="Babour A."/>
            <person name="Barbe V."/>
            <person name="Barnay S."/>
            <person name="Blanchin S."/>
            <person name="Beckerich J.-M."/>
            <person name="Beyne E."/>
            <person name="Bleykasten C."/>
            <person name="Boisrame A."/>
            <person name="Boyer J."/>
            <person name="Cattolico L."/>
            <person name="Confanioleri F."/>
            <person name="de Daruvar A."/>
            <person name="Despons L."/>
            <person name="Fabre E."/>
            <person name="Fairhead C."/>
            <person name="Ferry-Dumazet H."/>
            <person name="Groppi A."/>
            <person name="Hantraye F."/>
            <person name="Hennequin C."/>
            <person name="Jauniaux N."/>
            <person name="Joyet P."/>
            <person name="Kachouri R."/>
            <person name="Kerrest A."/>
            <person name="Koszul R."/>
            <person name="Lemaire M."/>
            <person name="Lesur I."/>
            <person name="Ma L."/>
            <person name="Muller H."/>
            <person name="Nicaud J.-M."/>
            <person name="Nikolski M."/>
            <person name="Oztas S."/>
            <person name="Ozier-Kalogeropoulos O."/>
            <person name="Pellenz S."/>
            <person name="Potier S."/>
            <person name="Richard G.-F."/>
            <person name="Straub M.-L."/>
            <person name="Suleau A."/>
            <person name="Swennen D."/>
            <person name="Tekaia F."/>
            <person name="Wesolowski-Louvel M."/>
            <person name="Westhof E."/>
            <person name="Wirth B."/>
            <person name="Zeniou-Meyer M."/>
            <person name="Zivanovic Y."/>
            <person name="Bolotin-Fukuhara M."/>
            <person name="Thierry A."/>
            <person name="Bouchier C."/>
            <person name="Caudron B."/>
            <person name="Scarpelli C."/>
            <person name="Gaillardin C."/>
            <person name="Weissenbach J."/>
            <person name="Wincker P."/>
            <person name="Souciet J.-L."/>
        </authorList>
    </citation>
    <scope>NUCLEOTIDE SEQUENCE [LARGE SCALE GENOMIC DNA]</scope>
    <source>
        <strain>ATCC 36239 / CBS 767 / BCRC 21394 / JCM 1990 / NBRC 0083 / IGC 2968</strain>
    </source>
</reference>
<name>RGI1_DEBHA</name>
<organism>
    <name type="scientific">Debaryomyces hansenii (strain ATCC 36239 / CBS 767 / BCRC 21394 / JCM 1990 / NBRC 0083 / IGC 2968)</name>
    <name type="common">Yeast</name>
    <name type="synonym">Torulaspora hansenii</name>
    <dbReference type="NCBI Taxonomy" id="284592"/>
    <lineage>
        <taxon>Eukaryota</taxon>
        <taxon>Fungi</taxon>
        <taxon>Dikarya</taxon>
        <taxon>Ascomycota</taxon>
        <taxon>Saccharomycotina</taxon>
        <taxon>Pichiomycetes</taxon>
        <taxon>Debaryomycetaceae</taxon>
        <taxon>Debaryomyces</taxon>
    </lineage>
</organism>
<protein>
    <recommendedName>
        <fullName>Respiratory growth induced protein 1</fullName>
    </recommendedName>
</protein>
<proteinExistence type="inferred from homology"/>
<keyword id="KW-1003">Cell membrane</keyword>
<keyword id="KW-0472">Membrane</keyword>
<keyword id="KW-1185">Reference proteome</keyword>